<gene>
    <name type="primary">HBA</name>
</gene>
<feature type="initiator methionine" description="Removed" evidence="5">
    <location>
        <position position="1"/>
    </location>
</feature>
<feature type="chain" id="PRO_0000052538" description="Hemoglobin subunit alpha">
    <location>
        <begin position="2"/>
        <end position="142"/>
    </location>
</feature>
<feature type="peptide" id="PRO_0000455837" description="Hemopressin" evidence="2">
    <location>
        <begin position="96"/>
        <end position="104"/>
    </location>
</feature>
<feature type="domain" description="Globin" evidence="4">
    <location>
        <begin position="2"/>
        <end position="142"/>
    </location>
</feature>
<feature type="binding site" evidence="4">
    <location>
        <position position="59"/>
    </location>
    <ligand>
        <name>O2</name>
        <dbReference type="ChEBI" id="CHEBI:15379"/>
    </ligand>
</feature>
<feature type="binding site" description="proximal binding residue" evidence="4">
    <location>
        <position position="88"/>
    </location>
    <ligand>
        <name>heme b</name>
        <dbReference type="ChEBI" id="CHEBI:60344"/>
    </ligand>
    <ligandPart>
        <name>Fe</name>
        <dbReference type="ChEBI" id="CHEBI:18248"/>
    </ligandPart>
</feature>
<feature type="modified residue" description="Phosphoserine" evidence="3">
    <location>
        <position position="4"/>
    </location>
</feature>
<feature type="modified residue" description="N6-succinyllysine" evidence="1">
    <location>
        <position position="8"/>
    </location>
</feature>
<feature type="modified residue" description="N6-succinyllysine" evidence="1">
    <location>
        <position position="12"/>
    </location>
</feature>
<feature type="modified residue" description="N6-acetyllysine; alternate" evidence="3">
    <location>
        <position position="17"/>
    </location>
</feature>
<feature type="modified residue" description="N6-succinyllysine; alternate" evidence="1">
    <location>
        <position position="17"/>
    </location>
</feature>
<feature type="modified residue" description="Phosphotyrosine" evidence="3">
    <location>
        <position position="25"/>
    </location>
</feature>
<feature type="modified residue" description="Phosphoserine" evidence="3">
    <location>
        <position position="36"/>
    </location>
</feature>
<feature type="modified residue" description="N6-succinyllysine" evidence="1">
    <location>
        <position position="41"/>
    </location>
</feature>
<feature type="modified residue" description="Phosphoserine" evidence="3">
    <location>
        <position position="50"/>
    </location>
</feature>
<feature type="modified residue" description="Phosphoserine" evidence="1">
    <location>
        <position position="103"/>
    </location>
</feature>
<feature type="modified residue" description="Phosphothreonine" evidence="1">
    <location>
        <position position="109"/>
    </location>
</feature>
<feature type="modified residue" description="Phosphoserine" evidence="1">
    <location>
        <position position="125"/>
    </location>
</feature>
<feature type="modified residue" description="Phosphothreonine" evidence="1">
    <location>
        <position position="135"/>
    </location>
</feature>
<feature type="modified residue" description="Phosphothreonine" evidence="1">
    <location>
        <position position="138"/>
    </location>
</feature>
<feature type="modified residue" description="Phosphoserine" evidence="1">
    <location>
        <position position="139"/>
    </location>
</feature>
<evidence type="ECO:0000250" key="1">
    <source>
        <dbReference type="UniProtKB" id="P01942"/>
    </source>
</evidence>
<evidence type="ECO:0000250" key="2">
    <source>
        <dbReference type="UniProtKB" id="P01946"/>
    </source>
</evidence>
<evidence type="ECO:0000250" key="3">
    <source>
        <dbReference type="UniProtKB" id="P69905"/>
    </source>
</evidence>
<evidence type="ECO:0000255" key="4">
    <source>
        <dbReference type="PROSITE-ProRule" id="PRU00238"/>
    </source>
</evidence>
<evidence type="ECO:0000269" key="5">
    <source>
    </source>
</evidence>
<accession>P01971</accession>
<keyword id="KW-0007">Acetylation</keyword>
<keyword id="KW-0903">Direct protein sequencing</keyword>
<keyword id="KW-0349">Heme</keyword>
<keyword id="KW-0408">Iron</keyword>
<keyword id="KW-0479">Metal-binding</keyword>
<keyword id="KW-0561">Oxygen transport</keyword>
<keyword id="KW-0597">Phosphoprotein</keyword>
<keyword id="KW-0813">Transport</keyword>
<comment type="function">
    <text>Involved in oxygen transport from the lung to the various peripheral tissues.</text>
</comment>
<comment type="function">
    <molecule>Hemopressin</molecule>
    <text evidence="2">Hemopressin acts as an antagonist peptide of the cannabinoid receptor CNR1. Hemopressin-binding efficiently blocks cannabinoid receptor CNR1 and subsequent signaling.</text>
</comment>
<comment type="subunit">
    <text>Heterotetramer of two alpha chains and two beta chains.</text>
</comment>
<comment type="tissue specificity">
    <text>Red blood cells.</text>
</comment>
<comment type="similarity">
    <text evidence="4">Belongs to the globin family.</text>
</comment>
<organism>
    <name type="scientific">Alces alces alces</name>
    <name type="common">European moose</name>
    <name type="synonym">Elk</name>
    <dbReference type="NCBI Taxonomy" id="9853"/>
    <lineage>
        <taxon>Eukaryota</taxon>
        <taxon>Metazoa</taxon>
        <taxon>Chordata</taxon>
        <taxon>Craniata</taxon>
        <taxon>Vertebrata</taxon>
        <taxon>Euteleostomi</taxon>
        <taxon>Mammalia</taxon>
        <taxon>Eutheria</taxon>
        <taxon>Laurasiatheria</taxon>
        <taxon>Artiodactyla</taxon>
        <taxon>Ruminantia</taxon>
        <taxon>Pecora</taxon>
        <taxon>Cervidae</taxon>
        <taxon>Odocoileinae</taxon>
        <taxon>Alces</taxon>
    </lineage>
</organism>
<sequence length="142" mass="15246">MVLSATDKSNVKAAWGKVGGNAPAYGAEALERMFLSFPTTKTYFPHFDLSHGSAQVKAHGEKVANALTKAVGHLDDLPGTLSDLSDLHAHKLRVDPVNFKLLSHTLLVTLAAHLPSDFTPAVHASLDKFLANVSTVLTSKYR</sequence>
<dbReference type="PIR" id="A02295">
    <property type="entry name" value="HAEKN"/>
</dbReference>
<dbReference type="SMR" id="P01971"/>
<dbReference type="GO" id="GO:0072562">
    <property type="term" value="C:blood microparticle"/>
    <property type="evidence" value="ECO:0007669"/>
    <property type="project" value="TreeGrafter"/>
</dbReference>
<dbReference type="GO" id="GO:0031838">
    <property type="term" value="C:haptoglobin-hemoglobin complex"/>
    <property type="evidence" value="ECO:0007669"/>
    <property type="project" value="TreeGrafter"/>
</dbReference>
<dbReference type="GO" id="GO:0005833">
    <property type="term" value="C:hemoglobin complex"/>
    <property type="evidence" value="ECO:0007669"/>
    <property type="project" value="InterPro"/>
</dbReference>
<dbReference type="GO" id="GO:0031720">
    <property type="term" value="F:haptoglobin binding"/>
    <property type="evidence" value="ECO:0007669"/>
    <property type="project" value="TreeGrafter"/>
</dbReference>
<dbReference type="GO" id="GO:0020037">
    <property type="term" value="F:heme binding"/>
    <property type="evidence" value="ECO:0007669"/>
    <property type="project" value="InterPro"/>
</dbReference>
<dbReference type="GO" id="GO:0005506">
    <property type="term" value="F:iron ion binding"/>
    <property type="evidence" value="ECO:0007669"/>
    <property type="project" value="InterPro"/>
</dbReference>
<dbReference type="GO" id="GO:0043177">
    <property type="term" value="F:organic acid binding"/>
    <property type="evidence" value="ECO:0007669"/>
    <property type="project" value="TreeGrafter"/>
</dbReference>
<dbReference type="GO" id="GO:0019825">
    <property type="term" value="F:oxygen binding"/>
    <property type="evidence" value="ECO:0007669"/>
    <property type="project" value="InterPro"/>
</dbReference>
<dbReference type="GO" id="GO:0005344">
    <property type="term" value="F:oxygen carrier activity"/>
    <property type="evidence" value="ECO:0007669"/>
    <property type="project" value="UniProtKB-KW"/>
</dbReference>
<dbReference type="GO" id="GO:0004601">
    <property type="term" value="F:peroxidase activity"/>
    <property type="evidence" value="ECO:0007669"/>
    <property type="project" value="TreeGrafter"/>
</dbReference>
<dbReference type="GO" id="GO:0042744">
    <property type="term" value="P:hydrogen peroxide catabolic process"/>
    <property type="evidence" value="ECO:0007669"/>
    <property type="project" value="TreeGrafter"/>
</dbReference>
<dbReference type="CDD" id="cd08927">
    <property type="entry name" value="Hb-alpha-like"/>
    <property type="match status" value="1"/>
</dbReference>
<dbReference type="FunFam" id="1.10.490.10:FF:000002">
    <property type="entry name" value="Hemoglobin subunit alpha"/>
    <property type="match status" value="1"/>
</dbReference>
<dbReference type="Gene3D" id="1.10.490.10">
    <property type="entry name" value="Globins"/>
    <property type="match status" value="1"/>
</dbReference>
<dbReference type="InterPro" id="IPR000971">
    <property type="entry name" value="Globin"/>
</dbReference>
<dbReference type="InterPro" id="IPR009050">
    <property type="entry name" value="Globin-like_sf"/>
</dbReference>
<dbReference type="InterPro" id="IPR012292">
    <property type="entry name" value="Globin/Proto"/>
</dbReference>
<dbReference type="InterPro" id="IPR002338">
    <property type="entry name" value="Hemoglobin_a-typ"/>
</dbReference>
<dbReference type="InterPro" id="IPR050056">
    <property type="entry name" value="Hemoglobin_oxygen_transport"/>
</dbReference>
<dbReference type="InterPro" id="IPR002339">
    <property type="entry name" value="Hemoglobin_pi"/>
</dbReference>
<dbReference type="PANTHER" id="PTHR11442">
    <property type="entry name" value="HEMOGLOBIN FAMILY MEMBER"/>
    <property type="match status" value="1"/>
</dbReference>
<dbReference type="PANTHER" id="PTHR11442:SF48">
    <property type="entry name" value="HEMOGLOBIN SUBUNIT ALPHA"/>
    <property type="match status" value="1"/>
</dbReference>
<dbReference type="Pfam" id="PF00042">
    <property type="entry name" value="Globin"/>
    <property type="match status" value="1"/>
</dbReference>
<dbReference type="PRINTS" id="PR00612">
    <property type="entry name" value="ALPHAHAEM"/>
</dbReference>
<dbReference type="PRINTS" id="PR00815">
    <property type="entry name" value="PIHAEM"/>
</dbReference>
<dbReference type="SUPFAM" id="SSF46458">
    <property type="entry name" value="Globin-like"/>
    <property type="match status" value="1"/>
</dbReference>
<dbReference type="PROSITE" id="PS01033">
    <property type="entry name" value="GLOBIN"/>
    <property type="match status" value="1"/>
</dbReference>
<name>HBA_ALCAA</name>
<protein>
    <recommendedName>
        <fullName>Hemoglobin subunit alpha</fullName>
    </recommendedName>
    <alternativeName>
        <fullName>Alpha-globin</fullName>
    </alternativeName>
    <alternativeName>
        <fullName>Hemoglobin alpha chain</fullName>
    </alternativeName>
    <component>
        <recommendedName>
            <fullName evidence="2">Hemopressin</fullName>
        </recommendedName>
    </component>
</protein>
<reference key="1">
    <citation type="journal article" date="1984" name="Hoppe-Seyler's Z. Physiol. Chem.">
        <title>Intrinsic oxygen affinity: the primary structure of a ruminantia hemoglobin: methionine in betaNA2 of a pecora, the Northern elk (Alces alces alces).</title>
        <authorList>
            <person name="Aschauer H."/>
            <person name="Wiesner H."/>
            <person name="Braunitzer G."/>
        </authorList>
    </citation>
    <scope>PROTEIN SEQUENCE OF 2-142</scope>
</reference>
<proteinExistence type="evidence at protein level"/>